<organism>
    <name type="scientific">Nanoarchaeum equitans (strain Kin4-M)</name>
    <dbReference type="NCBI Taxonomy" id="228908"/>
    <lineage>
        <taxon>Archaea</taxon>
        <taxon>Nanobdellota</taxon>
        <taxon>Candidatus Nanoarchaeia</taxon>
        <taxon>Nanoarchaeales</taxon>
        <taxon>Nanoarchaeaceae</taxon>
        <taxon>Nanoarchaeum</taxon>
    </lineage>
</organism>
<reference key="1">
    <citation type="journal article" date="2003" name="Proc. Natl. Acad. Sci. U.S.A.">
        <title>The genome of Nanoarchaeum equitans: insights into early archaeal evolution and derived parasitism.</title>
        <authorList>
            <person name="Waters E."/>
            <person name="Hohn M.J."/>
            <person name="Ahel I."/>
            <person name="Graham D.E."/>
            <person name="Adams M.D."/>
            <person name="Barnstead M."/>
            <person name="Beeson K.Y."/>
            <person name="Bibbs L."/>
            <person name="Bolanos R."/>
            <person name="Keller M."/>
            <person name="Kretz K."/>
            <person name="Lin X."/>
            <person name="Mathur E."/>
            <person name="Ni J."/>
            <person name="Podar M."/>
            <person name="Richardson T."/>
            <person name="Sutton G.G."/>
            <person name="Simon M."/>
            <person name="Soell D."/>
            <person name="Stetter K.O."/>
            <person name="Short J.M."/>
            <person name="Noorderwier M."/>
        </authorList>
    </citation>
    <scope>NUCLEOTIDE SEQUENCE [LARGE SCALE GENOMIC DNA]</scope>
    <source>
        <strain>Kin4-M</strain>
    </source>
</reference>
<gene>
    <name evidence="1" type="primary">rps24e</name>
    <name type="ordered locus">NEQ548</name>
</gene>
<protein>
    <recommendedName>
        <fullName evidence="1">Small ribosomal subunit protein eS24</fullName>
    </recommendedName>
    <alternativeName>
        <fullName evidence="2">30S ribosomal protein S24e</fullName>
    </alternativeName>
</protein>
<dbReference type="EMBL" id="AE017199">
    <property type="protein sequence ID" value="AAR39388.1"/>
    <property type="molecule type" value="Genomic_DNA"/>
</dbReference>
<dbReference type="SMR" id="Q74M50"/>
<dbReference type="STRING" id="228908.NEQ548"/>
<dbReference type="EnsemblBacteria" id="AAR39388">
    <property type="protein sequence ID" value="AAR39388"/>
    <property type="gene ID" value="NEQ548"/>
</dbReference>
<dbReference type="KEGG" id="neq:NEQ548"/>
<dbReference type="HOGENOM" id="CLU_107248_3_0_2"/>
<dbReference type="Proteomes" id="UP000000578">
    <property type="component" value="Chromosome"/>
</dbReference>
<dbReference type="GO" id="GO:1990904">
    <property type="term" value="C:ribonucleoprotein complex"/>
    <property type="evidence" value="ECO:0007669"/>
    <property type="project" value="UniProtKB-KW"/>
</dbReference>
<dbReference type="GO" id="GO:0005840">
    <property type="term" value="C:ribosome"/>
    <property type="evidence" value="ECO:0007669"/>
    <property type="project" value="UniProtKB-KW"/>
</dbReference>
<dbReference type="GO" id="GO:0003735">
    <property type="term" value="F:structural constituent of ribosome"/>
    <property type="evidence" value="ECO:0007669"/>
    <property type="project" value="InterPro"/>
</dbReference>
<dbReference type="GO" id="GO:0006412">
    <property type="term" value="P:translation"/>
    <property type="evidence" value="ECO:0007669"/>
    <property type="project" value="UniProtKB-UniRule"/>
</dbReference>
<dbReference type="Gene3D" id="3.30.70.330">
    <property type="match status" value="1"/>
</dbReference>
<dbReference type="HAMAP" id="MF_00545">
    <property type="entry name" value="Ribosomal_eS24"/>
    <property type="match status" value="1"/>
</dbReference>
<dbReference type="InterPro" id="IPR012677">
    <property type="entry name" value="Nucleotide-bd_a/b_plait_sf"/>
</dbReference>
<dbReference type="InterPro" id="IPR001976">
    <property type="entry name" value="Ribosomal_eS24"/>
</dbReference>
<dbReference type="InterPro" id="IPR018098">
    <property type="entry name" value="Ribosomal_eS24_CS"/>
</dbReference>
<dbReference type="InterPro" id="IPR012678">
    <property type="entry name" value="Ribosomal_uL23/eL15/eS24_sf"/>
</dbReference>
<dbReference type="PANTHER" id="PTHR10496">
    <property type="entry name" value="40S RIBOSOMAL PROTEIN S24"/>
    <property type="match status" value="1"/>
</dbReference>
<dbReference type="Pfam" id="PF01282">
    <property type="entry name" value="Ribosomal_S24e"/>
    <property type="match status" value="1"/>
</dbReference>
<dbReference type="SUPFAM" id="SSF54189">
    <property type="entry name" value="Ribosomal proteins S24e, L23 and L15e"/>
    <property type="match status" value="1"/>
</dbReference>
<dbReference type="PROSITE" id="PS00529">
    <property type="entry name" value="RIBOSOMAL_S24E"/>
    <property type="match status" value="1"/>
</dbReference>
<proteinExistence type="inferred from homology"/>
<sequence length="94" mass="11261">MAKYSIIMEKKNKLFDRTEYIIQVEHPKEKTPTREEAKEKIAEMLNVDKNKLVIKKIVSKYGLPYSFIYARVYDNIDTAKRVELKQILRRNNLQ</sequence>
<evidence type="ECO:0000255" key="1">
    <source>
        <dbReference type="HAMAP-Rule" id="MF_00545"/>
    </source>
</evidence>
<evidence type="ECO:0000305" key="2"/>
<keyword id="KW-1185">Reference proteome</keyword>
<keyword id="KW-0687">Ribonucleoprotein</keyword>
<keyword id="KW-0689">Ribosomal protein</keyword>
<feature type="chain" id="PRO_0000137648" description="Small ribosomal subunit protein eS24">
    <location>
        <begin position="1"/>
        <end position="94"/>
    </location>
</feature>
<name>RS24_NANEQ</name>
<accession>Q74M50</accession>
<comment type="similarity">
    <text evidence="1">Belongs to the eukaryotic ribosomal protein eS24 family.</text>
</comment>